<reference key="1">
    <citation type="journal article" date="2004" name="Nature">
        <title>Genome sequence of Silicibacter pomeroyi reveals adaptations to the marine environment.</title>
        <authorList>
            <person name="Moran M.A."/>
            <person name="Buchan A."/>
            <person name="Gonzalez J.M."/>
            <person name="Heidelberg J.F."/>
            <person name="Whitman W.B."/>
            <person name="Kiene R.P."/>
            <person name="Henriksen J.R."/>
            <person name="King G.M."/>
            <person name="Belas R."/>
            <person name="Fuqua C."/>
            <person name="Brinkac L.M."/>
            <person name="Lewis M."/>
            <person name="Johri S."/>
            <person name="Weaver B."/>
            <person name="Pai G."/>
            <person name="Eisen J.A."/>
            <person name="Rahe E."/>
            <person name="Sheldon W.M."/>
            <person name="Ye W."/>
            <person name="Miller T.R."/>
            <person name="Carlton J."/>
            <person name="Rasko D.A."/>
            <person name="Paulsen I.T."/>
            <person name="Ren Q."/>
            <person name="Daugherty S.C."/>
            <person name="DeBoy R.T."/>
            <person name="Dodson R.J."/>
            <person name="Durkin A.S."/>
            <person name="Madupu R."/>
            <person name="Nelson W.C."/>
            <person name="Sullivan S.A."/>
            <person name="Rosovitz M.J."/>
            <person name="Haft D.H."/>
            <person name="Selengut J."/>
            <person name="Ward N."/>
        </authorList>
    </citation>
    <scope>NUCLEOTIDE SEQUENCE [LARGE SCALE GENOMIC DNA]</scope>
    <source>
        <strain>ATCC 700808 / DSM 15171 / DSS-3</strain>
    </source>
</reference>
<reference key="2">
    <citation type="journal article" date="2014" name="Stand. Genomic Sci.">
        <title>An updated genome annotation for the model marine bacterium Ruegeria pomeroyi DSS-3.</title>
        <authorList>
            <person name="Rivers A.R."/>
            <person name="Smith C.B."/>
            <person name="Moran M.A."/>
        </authorList>
    </citation>
    <scope>GENOME REANNOTATION</scope>
    <source>
        <strain>ATCC 700808 / DSM 15171 / DSS-3</strain>
    </source>
</reference>
<keyword id="KW-0997">Cell inner membrane</keyword>
<keyword id="KW-1003">Cell membrane</keyword>
<keyword id="KW-0342">GTP-binding</keyword>
<keyword id="KW-0378">Hydrolase</keyword>
<keyword id="KW-0472">Membrane</keyword>
<keyword id="KW-0547">Nucleotide-binding</keyword>
<keyword id="KW-0648">Protein biosynthesis</keyword>
<keyword id="KW-1185">Reference proteome</keyword>
<accession>Q5LUS0</accession>
<proteinExistence type="inferred from homology"/>
<feature type="chain" id="PRO_0000224797" description="Elongation factor 4">
    <location>
        <begin position="1"/>
        <end position="599"/>
    </location>
</feature>
<feature type="domain" description="tr-type G">
    <location>
        <begin position="5"/>
        <end position="187"/>
    </location>
</feature>
<feature type="binding site" evidence="1">
    <location>
        <begin position="17"/>
        <end position="22"/>
    </location>
    <ligand>
        <name>GTP</name>
        <dbReference type="ChEBI" id="CHEBI:37565"/>
    </ligand>
</feature>
<feature type="binding site" evidence="1">
    <location>
        <begin position="134"/>
        <end position="137"/>
    </location>
    <ligand>
        <name>GTP</name>
        <dbReference type="ChEBI" id="CHEBI:37565"/>
    </ligand>
</feature>
<gene>
    <name evidence="1" type="primary">lepA</name>
    <name type="ordered locus">SPO0983</name>
</gene>
<protein>
    <recommendedName>
        <fullName evidence="1">Elongation factor 4</fullName>
        <shortName evidence="1">EF-4</shortName>
        <ecNumber evidence="1">3.6.5.n1</ecNumber>
    </recommendedName>
    <alternativeName>
        <fullName evidence="1">Ribosomal back-translocase LepA</fullName>
    </alternativeName>
</protein>
<comment type="function">
    <text evidence="1">Required for accurate and efficient protein synthesis under certain stress conditions. May act as a fidelity factor of the translation reaction, by catalyzing a one-codon backward translocation of tRNAs on improperly translocated ribosomes. Back-translocation proceeds from a post-translocation (POST) complex to a pre-translocation (PRE) complex, thus giving elongation factor G a second chance to translocate the tRNAs correctly. Binds to ribosomes in a GTP-dependent manner.</text>
</comment>
<comment type="catalytic activity">
    <reaction evidence="1">
        <text>GTP + H2O = GDP + phosphate + H(+)</text>
        <dbReference type="Rhea" id="RHEA:19669"/>
        <dbReference type="ChEBI" id="CHEBI:15377"/>
        <dbReference type="ChEBI" id="CHEBI:15378"/>
        <dbReference type="ChEBI" id="CHEBI:37565"/>
        <dbReference type="ChEBI" id="CHEBI:43474"/>
        <dbReference type="ChEBI" id="CHEBI:58189"/>
        <dbReference type="EC" id="3.6.5.n1"/>
    </reaction>
</comment>
<comment type="subcellular location">
    <subcellularLocation>
        <location evidence="1">Cell inner membrane</location>
        <topology evidence="1">Peripheral membrane protein</topology>
        <orientation evidence="1">Cytoplasmic side</orientation>
    </subcellularLocation>
</comment>
<comment type="similarity">
    <text evidence="1">Belongs to the TRAFAC class translation factor GTPase superfamily. Classic translation factor GTPase family. LepA subfamily.</text>
</comment>
<name>LEPA_RUEPO</name>
<dbReference type="EC" id="3.6.5.n1" evidence="1"/>
<dbReference type="EMBL" id="CP000031">
    <property type="protein sequence ID" value="AAV94287.1"/>
    <property type="molecule type" value="Genomic_DNA"/>
</dbReference>
<dbReference type="RefSeq" id="WP_011046731.1">
    <property type="nucleotide sequence ID" value="NC_003911.12"/>
</dbReference>
<dbReference type="SMR" id="Q5LUS0"/>
<dbReference type="STRING" id="246200.SPO0983"/>
<dbReference type="PaxDb" id="246200-SPO0983"/>
<dbReference type="KEGG" id="sil:SPO0983"/>
<dbReference type="eggNOG" id="COG0481">
    <property type="taxonomic scope" value="Bacteria"/>
</dbReference>
<dbReference type="HOGENOM" id="CLU_009995_3_3_5"/>
<dbReference type="OrthoDB" id="9802948at2"/>
<dbReference type="Proteomes" id="UP000001023">
    <property type="component" value="Chromosome"/>
</dbReference>
<dbReference type="GO" id="GO:0005886">
    <property type="term" value="C:plasma membrane"/>
    <property type="evidence" value="ECO:0007669"/>
    <property type="project" value="UniProtKB-SubCell"/>
</dbReference>
<dbReference type="GO" id="GO:0005525">
    <property type="term" value="F:GTP binding"/>
    <property type="evidence" value="ECO:0007669"/>
    <property type="project" value="UniProtKB-UniRule"/>
</dbReference>
<dbReference type="GO" id="GO:0003924">
    <property type="term" value="F:GTPase activity"/>
    <property type="evidence" value="ECO:0007669"/>
    <property type="project" value="UniProtKB-UniRule"/>
</dbReference>
<dbReference type="GO" id="GO:0097216">
    <property type="term" value="F:guanosine tetraphosphate binding"/>
    <property type="evidence" value="ECO:0007669"/>
    <property type="project" value="UniProtKB-ARBA"/>
</dbReference>
<dbReference type="GO" id="GO:0043022">
    <property type="term" value="F:ribosome binding"/>
    <property type="evidence" value="ECO:0007669"/>
    <property type="project" value="UniProtKB-UniRule"/>
</dbReference>
<dbReference type="GO" id="GO:0003746">
    <property type="term" value="F:translation elongation factor activity"/>
    <property type="evidence" value="ECO:0007669"/>
    <property type="project" value="UniProtKB-UniRule"/>
</dbReference>
<dbReference type="GO" id="GO:0045727">
    <property type="term" value="P:positive regulation of translation"/>
    <property type="evidence" value="ECO:0007669"/>
    <property type="project" value="UniProtKB-UniRule"/>
</dbReference>
<dbReference type="CDD" id="cd03699">
    <property type="entry name" value="EF4_II"/>
    <property type="match status" value="1"/>
</dbReference>
<dbReference type="CDD" id="cd16260">
    <property type="entry name" value="EF4_III"/>
    <property type="match status" value="1"/>
</dbReference>
<dbReference type="CDD" id="cd01890">
    <property type="entry name" value="LepA"/>
    <property type="match status" value="1"/>
</dbReference>
<dbReference type="CDD" id="cd03709">
    <property type="entry name" value="lepA_C"/>
    <property type="match status" value="1"/>
</dbReference>
<dbReference type="FunFam" id="3.40.50.300:FF:000078">
    <property type="entry name" value="Elongation factor 4"/>
    <property type="match status" value="1"/>
</dbReference>
<dbReference type="FunFam" id="2.40.30.10:FF:000015">
    <property type="entry name" value="Translation factor GUF1, mitochondrial"/>
    <property type="match status" value="1"/>
</dbReference>
<dbReference type="FunFam" id="3.30.70.240:FF:000007">
    <property type="entry name" value="Translation factor GUF1, mitochondrial"/>
    <property type="match status" value="1"/>
</dbReference>
<dbReference type="FunFam" id="3.30.70.2570:FF:000001">
    <property type="entry name" value="Translation factor GUF1, mitochondrial"/>
    <property type="match status" value="1"/>
</dbReference>
<dbReference type="FunFam" id="3.30.70.870:FF:000004">
    <property type="entry name" value="Translation factor GUF1, mitochondrial"/>
    <property type="match status" value="1"/>
</dbReference>
<dbReference type="Gene3D" id="3.30.70.240">
    <property type="match status" value="1"/>
</dbReference>
<dbReference type="Gene3D" id="3.30.70.2570">
    <property type="entry name" value="Elongation factor 4, C-terminal domain"/>
    <property type="match status" value="1"/>
</dbReference>
<dbReference type="Gene3D" id="3.30.70.870">
    <property type="entry name" value="Elongation Factor G (Translational Gtpase), domain 3"/>
    <property type="match status" value="1"/>
</dbReference>
<dbReference type="Gene3D" id="3.40.50.300">
    <property type="entry name" value="P-loop containing nucleotide triphosphate hydrolases"/>
    <property type="match status" value="1"/>
</dbReference>
<dbReference type="Gene3D" id="2.40.30.10">
    <property type="entry name" value="Translation factors"/>
    <property type="match status" value="1"/>
</dbReference>
<dbReference type="HAMAP" id="MF_00071">
    <property type="entry name" value="LepA"/>
    <property type="match status" value="1"/>
</dbReference>
<dbReference type="InterPro" id="IPR006297">
    <property type="entry name" value="EF-4"/>
</dbReference>
<dbReference type="InterPro" id="IPR035647">
    <property type="entry name" value="EFG_III/V"/>
</dbReference>
<dbReference type="InterPro" id="IPR000640">
    <property type="entry name" value="EFG_V-like"/>
</dbReference>
<dbReference type="InterPro" id="IPR004161">
    <property type="entry name" value="EFTu-like_2"/>
</dbReference>
<dbReference type="InterPro" id="IPR031157">
    <property type="entry name" value="G_TR_CS"/>
</dbReference>
<dbReference type="InterPro" id="IPR038363">
    <property type="entry name" value="LepA_C_sf"/>
</dbReference>
<dbReference type="InterPro" id="IPR013842">
    <property type="entry name" value="LepA_CTD"/>
</dbReference>
<dbReference type="InterPro" id="IPR035654">
    <property type="entry name" value="LepA_IV"/>
</dbReference>
<dbReference type="InterPro" id="IPR027417">
    <property type="entry name" value="P-loop_NTPase"/>
</dbReference>
<dbReference type="InterPro" id="IPR005225">
    <property type="entry name" value="Small_GTP-bd"/>
</dbReference>
<dbReference type="InterPro" id="IPR000795">
    <property type="entry name" value="T_Tr_GTP-bd_dom"/>
</dbReference>
<dbReference type="NCBIfam" id="TIGR01393">
    <property type="entry name" value="lepA"/>
    <property type="match status" value="1"/>
</dbReference>
<dbReference type="NCBIfam" id="TIGR00231">
    <property type="entry name" value="small_GTP"/>
    <property type="match status" value="1"/>
</dbReference>
<dbReference type="PANTHER" id="PTHR43512:SF4">
    <property type="entry name" value="TRANSLATION FACTOR GUF1 HOMOLOG, CHLOROPLASTIC"/>
    <property type="match status" value="1"/>
</dbReference>
<dbReference type="PANTHER" id="PTHR43512">
    <property type="entry name" value="TRANSLATION FACTOR GUF1-RELATED"/>
    <property type="match status" value="1"/>
</dbReference>
<dbReference type="Pfam" id="PF00679">
    <property type="entry name" value="EFG_C"/>
    <property type="match status" value="1"/>
</dbReference>
<dbReference type="Pfam" id="PF00009">
    <property type="entry name" value="GTP_EFTU"/>
    <property type="match status" value="1"/>
</dbReference>
<dbReference type="Pfam" id="PF03144">
    <property type="entry name" value="GTP_EFTU_D2"/>
    <property type="match status" value="1"/>
</dbReference>
<dbReference type="Pfam" id="PF06421">
    <property type="entry name" value="LepA_C"/>
    <property type="match status" value="1"/>
</dbReference>
<dbReference type="PRINTS" id="PR00315">
    <property type="entry name" value="ELONGATNFCT"/>
</dbReference>
<dbReference type="SMART" id="SM00838">
    <property type="entry name" value="EFG_C"/>
    <property type="match status" value="1"/>
</dbReference>
<dbReference type="SUPFAM" id="SSF54980">
    <property type="entry name" value="EF-G C-terminal domain-like"/>
    <property type="match status" value="2"/>
</dbReference>
<dbReference type="SUPFAM" id="SSF52540">
    <property type="entry name" value="P-loop containing nucleoside triphosphate hydrolases"/>
    <property type="match status" value="1"/>
</dbReference>
<dbReference type="PROSITE" id="PS00301">
    <property type="entry name" value="G_TR_1"/>
    <property type="match status" value="1"/>
</dbReference>
<dbReference type="PROSITE" id="PS51722">
    <property type="entry name" value="G_TR_2"/>
    <property type="match status" value="1"/>
</dbReference>
<organism>
    <name type="scientific">Ruegeria pomeroyi (strain ATCC 700808 / DSM 15171 / DSS-3)</name>
    <name type="common">Silicibacter pomeroyi</name>
    <dbReference type="NCBI Taxonomy" id="246200"/>
    <lineage>
        <taxon>Bacteria</taxon>
        <taxon>Pseudomonadati</taxon>
        <taxon>Pseudomonadota</taxon>
        <taxon>Alphaproteobacteria</taxon>
        <taxon>Rhodobacterales</taxon>
        <taxon>Roseobacteraceae</taxon>
        <taxon>Ruegeria</taxon>
    </lineage>
</organism>
<evidence type="ECO:0000255" key="1">
    <source>
        <dbReference type="HAMAP-Rule" id="MF_00071"/>
    </source>
</evidence>
<sequence length="599" mass="66690">MTDLAHIRNFSIVAHIDHGKSTLADRLIQETGTVQDRDMKEQLLDAMDIERERGITIKANTVRIDYTADDGQAYVLNLIDTPGHVDFAYEVSRSMRAVEGSLLVVDSTQGVEAQTLANVYQAIDADHEIVPILNKIDLPASECDRVAEQIEDVIGIDASGAIRVSAKTGVGIHETLEAIVKHLPAPKGTRDAPLKAMLVDSWYDSYLGVIVLVRIMDGVLKKGMRVKFMSNGTLHHVDRIGVFRPAMQMIDSLGPGEIGFLTASIKQVRDTRVGDTITNDRNGTEVALPGFKPAQPVVFCGLFPVDSAEFEDLRDAIEKLALNDASFSYEMETSAALGFGFRCGFLGLLHLEVIRDRLEREYDIELITTAPSVVYHVFMKDGEMRELHNPADMPDLSKVDHIEEPRIKATILVPDEYLGDVLKLCQDRRGIQQDLSYAGSRAMVVYDLPLNEVVFDFYDRLKSVTKGYASFDYQLTGYREDSLVKMSILVNDEPVDALSTMVHRDRAEARGRAMCEKLKDLIPRHMFKIPIQAAIGGKVIARETLSALRKDVTAKCYGGDATRKRKLLDKQKAGKKKMRQFGKVDIPQEAFISALKMDS</sequence>